<protein>
    <recommendedName>
        <fullName>Uncharacterized lipoprotein MW2406</fullName>
    </recommendedName>
</protein>
<name>Y2406_STAAW</name>
<accession>Q8NUV8</accession>
<dbReference type="EMBL" id="BA000033">
    <property type="protein sequence ID" value="BAB96271.1"/>
    <property type="molecule type" value="Genomic_DNA"/>
</dbReference>
<dbReference type="RefSeq" id="WP_001826866.1">
    <property type="nucleotide sequence ID" value="NC_003923.1"/>
</dbReference>
<dbReference type="SMR" id="Q8NUV8"/>
<dbReference type="KEGG" id="sam:MW2406"/>
<dbReference type="HOGENOM" id="CLU_071589_0_1_9"/>
<dbReference type="GO" id="GO:0005886">
    <property type="term" value="C:plasma membrane"/>
    <property type="evidence" value="ECO:0007669"/>
    <property type="project" value="UniProtKB-SubCell"/>
</dbReference>
<dbReference type="Gene3D" id="2.50.20.40">
    <property type="match status" value="1"/>
</dbReference>
<dbReference type="InterPro" id="IPR007595">
    <property type="entry name" value="Csa"/>
</dbReference>
<dbReference type="InterPro" id="IPR038641">
    <property type="entry name" value="Csa_sf"/>
</dbReference>
<dbReference type="NCBIfam" id="TIGR01742">
    <property type="entry name" value="SA_tandem_lipo"/>
    <property type="match status" value="1"/>
</dbReference>
<dbReference type="Pfam" id="PF04507">
    <property type="entry name" value="DUF576"/>
    <property type="match status" value="1"/>
</dbReference>
<dbReference type="PROSITE" id="PS51257">
    <property type="entry name" value="PROKAR_LIPOPROTEIN"/>
    <property type="match status" value="1"/>
</dbReference>
<comment type="subcellular location">
    <subcellularLocation>
        <location evidence="1">Cell membrane</location>
        <topology evidence="1">Lipid-anchor</topology>
    </subcellularLocation>
</comment>
<comment type="similarity">
    <text evidence="2">Belongs to the staphylococcal tandem lipoprotein family.</text>
</comment>
<feature type="signal peptide" evidence="1">
    <location>
        <begin position="1"/>
        <end position="22"/>
    </location>
</feature>
<feature type="chain" id="PRO_0000282176" description="Uncharacterized lipoprotein MW2406">
    <location>
        <begin position="23"/>
        <end position="271"/>
    </location>
</feature>
<feature type="lipid moiety-binding region" description="N-palmitoyl cysteine" evidence="1">
    <location>
        <position position="23"/>
    </location>
</feature>
<feature type="lipid moiety-binding region" description="S-diacylglycerol cysteine" evidence="1">
    <location>
        <position position="23"/>
    </location>
</feature>
<evidence type="ECO:0000255" key="1">
    <source>
        <dbReference type="PROSITE-ProRule" id="PRU00303"/>
    </source>
</evidence>
<evidence type="ECO:0000305" key="2"/>
<reference key="1">
    <citation type="journal article" date="2002" name="Lancet">
        <title>Genome and virulence determinants of high virulence community-acquired MRSA.</title>
        <authorList>
            <person name="Baba T."/>
            <person name="Takeuchi F."/>
            <person name="Kuroda M."/>
            <person name="Yuzawa H."/>
            <person name="Aoki K."/>
            <person name="Oguchi A."/>
            <person name="Nagai Y."/>
            <person name="Iwama N."/>
            <person name="Asano K."/>
            <person name="Naimi T."/>
            <person name="Kuroda H."/>
            <person name="Cui L."/>
            <person name="Yamamoto K."/>
            <person name="Hiramatsu K."/>
        </authorList>
    </citation>
    <scope>NUCLEOTIDE SEQUENCE [LARGE SCALE GENOMIC DNA]</scope>
    <source>
        <strain>MW2</strain>
    </source>
</reference>
<proteinExistence type="inferred from homology"/>
<gene>
    <name type="ordered locus">MW2406</name>
</gene>
<organism>
    <name type="scientific">Staphylococcus aureus (strain MW2)</name>
    <dbReference type="NCBI Taxonomy" id="196620"/>
    <lineage>
        <taxon>Bacteria</taxon>
        <taxon>Bacillati</taxon>
        <taxon>Bacillota</taxon>
        <taxon>Bacilli</taxon>
        <taxon>Bacillales</taxon>
        <taxon>Staphylococcaceae</taxon>
        <taxon>Staphylococcus</taxon>
    </lineage>
</organism>
<keyword id="KW-1003">Cell membrane</keyword>
<keyword id="KW-0449">Lipoprotein</keyword>
<keyword id="KW-0472">Membrane</keyword>
<keyword id="KW-0564">Palmitate</keyword>
<keyword id="KW-0732">Signal</keyword>
<sequence length="271" mass="31505">MIHSKRLKLCLCLIILSVFIGACGMKKEESSKDKQIKENFNKILSLYPTKNLEDFYDKEGFRDEEFEKGDKGTWIIHSKMIIETNNSNMESRGMVLYINRNTRTTKGNFVVREITEDSKGYSHSKDTKYPVKMEHNRIIPTKPIADDKLRKEIENFKFFVQYGDFKDINDYKDGDISYNPNVPSYSAKYQLSNDDYNVKQLRKRYNIPTNKAPKLLLKGDGDLKGSSVGSKNLEFTFVENKEENIYFTDSVQYTPSEDTSYESNGISNKSW</sequence>